<organism>
    <name type="scientific">Staphylococcus aureus (strain Mu50 / ATCC 700699)</name>
    <dbReference type="NCBI Taxonomy" id="158878"/>
    <lineage>
        <taxon>Bacteria</taxon>
        <taxon>Bacillati</taxon>
        <taxon>Bacillota</taxon>
        <taxon>Bacilli</taxon>
        <taxon>Bacillales</taxon>
        <taxon>Staphylococcaceae</taxon>
        <taxon>Staphylococcus</taxon>
    </lineage>
</organism>
<dbReference type="EC" id="2.3.2.16"/>
<dbReference type="EMBL" id="BA000017">
    <property type="protein sequence ID" value="BAB58424.1"/>
    <property type="molecule type" value="Genomic_DNA"/>
</dbReference>
<dbReference type="RefSeq" id="WP_000413862.1">
    <property type="nucleotide sequence ID" value="NC_002758.2"/>
</dbReference>
<dbReference type="SMR" id="Q7A2M4"/>
<dbReference type="DNASU" id="1122287"/>
<dbReference type="KEGG" id="sav:SAV2262"/>
<dbReference type="HOGENOM" id="CLU_048411_0_1_9"/>
<dbReference type="PhylomeDB" id="Q7A2M4"/>
<dbReference type="BioCyc" id="MetaCyc:MONOMER-15452"/>
<dbReference type="Proteomes" id="UP000002481">
    <property type="component" value="Chromosome"/>
</dbReference>
<dbReference type="GO" id="GO:0005737">
    <property type="term" value="C:cytoplasm"/>
    <property type="evidence" value="ECO:0007669"/>
    <property type="project" value="UniProtKB-SubCell"/>
</dbReference>
<dbReference type="GO" id="GO:0016755">
    <property type="term" value="F:aminoacyltransferase activity"/>
    <property type="evidence" value="ECO:0007669"/>
    <property type="project" value="InterPro"/>
</dbReference>
<dbReference type="GO" id="GO:0071555">
    <property type="term" value="P:cell wall organization"/>
    <property type="evidence" value="ECO:0007669"/>
    <property type="project" value="UniProtKB-KW"/>
</dbReference>
<dbReference type="GO" id="GO:0009252">
    <property type="term" value="P:peptidoglycan biosynthetic process"/>
    <property type="evidence" value="ECO:0007669"/>
    <property type="project" value="UniProtKB-KW"/>
</dbReference>
<dbReference type="GO" id="GO:0008360">
    <property type="term" value="P:regulation of cell shape"/>
    <property type="evidence" value="ECO:0007669"/>
    <property type="project" value="UniProtKB-KW"/>
</dbReference>
<dbReference type="GO" id="GO:0046677">
    <property type="term" value="P:response to antibiotic"/>
    <property type="evidence" value="ECO:0007669"/>
    <property type="project" value="UniProtKB-KW"/>
</dbReference>
<dbReference type="Gene3D" id="1.20.58.90">
    <property type="match status" value="1"/>
</dbReference>
<dbReference type="Gene3D" id="3.40.630.30">
    <property type="match status" value="2"/>
</dbReference>
<dbReference type="InterPro" id="IPR016181">
    <property type="entry name" value="Acyl_CoA_acyltransferase"/>
</dbReference>
<dbReference type="InterPro" id="IPR003447">
    <property type="entry name" value="FEMABX"/>
</dbReference>
<dbReference type="InterPro" id="IPR050644">
    <property type="entry name" value="PG_Glycine_Bridge_Synth"/>
</dbReference>
<dbReference type="PANTHER" id="PTHR36174">
    <property type="entry name" value="LIPID II:GLYCINE GLYCYLTRANSFERASE"/>
    <property type="match status" value="1"/>
</dbReference>
<dbReference type="PANTHER" id="PTHR36174:SF1">
    <property type="entry name" value="LIPID II:GLYCINE GLYCYLTRANSFERASE"/>
    <property type="match status" value="1"/>
</dbReference>
<dbReference type="Pfam" id="PF02388">
    <property type="entry name" value="FemAB"/>
    <property type="match status" value="1"/>
</dbReference>
<dbReference type="SUPFAM" id="SSF55729">
    <property type="entry name" value="Acyl-CoA N-acyltransferases (Nat)"/>
    <property type="match status" value="2"/>
</dbReference>
<dbReference type="PROSITE" id="PS51191">
    <property type="entry name" value="FEMABX"/>
    <property type="match status" value="1"/>
</dbReference>
<protein>
    <recommendedName>
        <fullName>Lipid II:glycine glycyltransferase</fullName>
        <ecNumber>2.3.2.16</ecNumber>
    </recommendedName>
    <alternativeName>
        <fullName>Factor essential for expression of methicillin resistance X</fullName>
    </alternativeName>
</protein>
<comment type="function">
    <text evidence="2">Catalyzes the incorporation of the first glycine of the pentaglycine interpeptide bridge, which is characteristic of the S.aureus peptidoglycan. This glycine is added to the epsilon-amino group of the L-lysine of the membrane-bound lipid II intermediate (GlcNAc-(beta-1,4)-N-acetylmuramic acid(-L-Ala-D-iGln-L-Lys-D-Ala-D-Ala)-pyrophosphoryl-undecaprenol), using glycyl-tRNA(Gly) as donor, in a ribosome-independent mechanism. Involved in methicillin resistance.</text>
</comment>
<comment type="catalytic activity">
    <reaction>
        <text>beta-D-GlcNAc-(1-&gt;4)-Mur2Ac(oyl-L-Ala-D-isoglutaminyl-L-Lys-D-Ala-D-Ala)-di-trans,octa-cis-undecaprenyl diphosphate + glycyl-tRNA(Gly) = beta-D-GlcNAc-(1-&gt;4)-Mur2Ac(oyl-L-Ala-D-isoglutaminyl-L-Lys-(N(6)-Gly)-D-Ala-D-Ala)-di-trans,octa-cis-undecaprenyl diphosphate + tRNA(Gly) + H(+)</text>
        <dbReference type="Rhea" id="RHEA:30435"/>
        <dbReference type="Rhea" id="RHEA-COMP:9664"/>
        <dbReference type="Rhea" id="RHEA-COMP:9683"/>
        <dbReference type="ChEBI" id="CHEBI:15378"/>
        <dbReference type="ChEBI" id="CHEBI:62233"/>
        <dbReference type="ChEBI" id="CHEBI:62234"/>
        <dbReference type="ChEBI" id="CHEBI:78442"/>
        <dbReference type="ChEBI" id="CHEBI:78522"/>
        <dbReference type="EC" id="2.3.2.16"/>
    </reaction>
</comment>
<comment type="subunit">
    <text evidence="1">Monomer.</text>
</comment>
<comment type="subcellular location">
    <subcellularLocation>
        <location evidence="3">Cytoplasm</location>
    </subcellularLocation>
</comment>
<comment type="similarity">
    <text evidence="3">Belongs to the FemABX family.</text>
</comment>
<proteinExistence type="inferred from homology"/>
<accession>Q7A2M4</accession>
<keyword id="KW-0012">Acyltransferase</keyword>
<keyword id="KW-0046">Antibiotic resistance</keyword>
<keyword id="KW-0133">Cell shape</keyword>
<keyword id="KW-0961">Cell wall biogenesis/degradation</keyword>
<keyword id="KW-0963">Cytoplasm</keyword>
<keyword id="KW-0573">Peptidoglycan synthesis</keyword>
<keyword id="KW-0808">Transferase</keyword>
<evidence type="ECO:0000250" key="1"/>
<evidence type="ECO:0000269" key="2">
    <source>
    </source>
</evidence>
<evidence type="ECO:0000305" key="3"/>
<reference key="1">
    <citation type="journal article" date="2001" name="Lancet">
        <title>Whole genome sequencing of meticillin-resistant Staphylococcus aureus.</title>
        <authorList>
            <person name="Kuroda M."/>
            <person name="Ohta T."/>
            <person name="Uchiyama I."/>
            <person name="Baba T."/>
            <person name="Yuzawa H."/>
            <person name="Kobayashi I."/>
            <person name="Cui L."/>
            <person name="Oguchi A."/>
            <person name="Aoki K."/>
            <person name="Nagai Y."/>
            <person name="Lian J.-Q."/>
            <person name="Ito T."/>
            <person name="Kanamori M."/>
            <person name="Matsumaru H."/>
            <person name="Maruyama A."/>
            <person name="Murakami H."/>
            <person name="Hosoyama A."/>
            <person name="Mizutani-Ui Y."/>
            <person name="Takahashi N.K."/>
            <person name="Sawano T."/>
            <person name="Inoue R."/>
            <person name="Kaito C."/>
            <person name="Sekimizu K."/>
            <person name="Hirakawa H."/>
            <person name="Kuhara S."/>
            <person name="Goto S."/>
            <person name="Yabuzaki J."/>
            <person name="Kanehisa M."/>
            <person name="Yamashita A."/>
            <person name="Oshima K."/>
            <person name="Furuya K."/>
            <person name="Yoshino C."/>
            <person name="Shiba T."/>
            <person name="Hattori M."/>
            <person name="Ogasawara N."/>
            <person name="Hayashi H."/>
            <person name="Hiramatsu K."/>
        </authorList>
    </citation>
    <scope>NUCLEOTIDE SEQUENCE [LARGE SCALE GENOMIC DNA]</scope>
    <source>
        <strain>Mu50 / ATCC 700699</strain>
    </source>
</reference>
<reference key="2">
    <citation type="journal article" date="2004" name="J. Biol. Chem.">
        <title>Synthesis of mosaic peptidoglycan cross-bridges by hybrid peptidoglycan assembly pathways in Gram-positive bacteria.</title>
        <authorList>
            <person name="Arbeloa A."/>
            <person name="Hugonnet J.-E."/>
            <person name="Sentilhes A.-C."/>
            <person name="Josseaume N."/>
            <person name="Dubost L."/>
            <person name="Monsempes C."/>
            <person name="Blanot D."/>
            <person name="Brouard J.-P."/>
            <person name="Arthur M."/>
        </authorList>
    </citation>
    <scope>FUNCTION</scope>
</reference>
<feature type="chain" id="PRO_0000236171" description="Lipid II:glycine glycyltransferase">
    <location>
        <begin position="1"/>
        <end position="421"/>
    </location>
</feature>
<gene>
    <name type="primary">femX</name>
    <name type="synonym">fmhB</name>
    <name type="ordered locus">SAV2262</name>
</gene>
<name>FEMX_STAAM</name>
<sequence length="421" mass="48536">MEKMHITNQEHDAFVKSHPNGDLLQLTKWAETKKLTGWYARRIAVGRDGEVQGVAQLLFKKVPKLPYTLCYISRGFVVDYSNKEALNALLDSAKEIAKAEKAYAIKIDPDVEVDKGTDALQNLKALGFKHKGFKEGLSKDYIQPRMTMITPIDKNDDELLNSFERRNRSKVRLALKRGTTVERSDREGLKTFAELMKITGERDGFLTRDISYFENIYDALHEDGDAELFLVKLDPKENIAKVNQELNELHAEIAKWQQKMETSEKQAKKAQNMINDAQNKIAKNEDLKRDLEALEKEHPEGIYLSGALLMFAGSKSYYLYGASSNEFRDFLPNHHMQYTMMKYAREHGATTYDFGGTDNDPDKDSEHYGLWAFKKVWGTYLSEKIGEFDYILNQPLYQLIEQVKPRLTKAKIKISRKLKRK</sequence>